<protein>
    <recommendedName>
        <fullName evidence="1">Small ribosomal subunit protein uS13</fullName>
    </recommendedName>
    <alternativeName>
        <fullName evidence="3">30S ribosomal protein S13</fullName>
    </alternativeName>
</protein>
<sequence length="118" mass="13323">MARIAGINIPDQKHTVIALTAIYGIGRTRAQAICAATSIAEDAKIKELSEAQIDTLREEVANYIVEGDLRREVSMNIKRLMDLGCYRGLRHRRSLPLRGQRTKTNARTRKGPRKPIRK</sequence>
<proteinExistence type="inferred from homology"/>
<feature type="chain" id="PRO_1000086259" description="Small ribosomal subunit protein uS13">
    <location>
        <begin position="1"/>
        <end position="118"/>
    </location>
</feature>
<feature type="region of interest" description="Disordered" evidence="2">
    <location>
        <begin position="94"/>
        <end position="118"/>
    </location>
</feature>
<comment type="function">
    <text evidence="1">Located at the top of the head of the 30S subunit, it contacts several helices of the 16S rRNA. In the 70S ribosome it contacts the 23S rRNA (bridge B1a) and protein L5 of the 50S subunit (bridge B1b), connecting the 2 subunits; these bridges are implicated in subunit movement. Contacts the tRNAs in the A and P-sites.</text>
</comment>
<comment type="subunit">
    <text evidence="1">Part of the 30S ribosomal subunit. Forms a loose heterodimer with protein S19. Forms two bridges to the 50S subunit in the 70S ribosome.</text>
</comment>
<comment type="similarity">
    <text evidence="1">Belongs to the universal ribosomal protein uS13 family.</text>
</comment>
<dbReference type="EMBL" id="CP000931">
    <property type="protein sequence ID" value="ABZ78653.1"/>
    <property type="molecule type" value="Genomic_DNA"/>
</dbReference>
<dbReference type="RefSeq" id="WP_012153475.1">
    <property type="nucleotide sequence ID" value="NC_010334.1"/>
</dbReference>
<dbReference type="SMR" id="B0TLZ1"/>
<dbReference type="STRING" id="458817.Shal_4113"/>
<dbReference type="KEGG" id="shl:Shal_4113"/>
<dbReference type="eggNOG" id="COG0099">
    <property type="taxonomic scope" value="Bacteria"/>
</dbReference>
<dbReference type="HOGENOM" id="CLU_103849_1_2_6"/>
<dbReference type="OrthoDB" id="9803610at2"/>
<dbReference type="Proteomes" id="UP000001317">
    <property type="component" value="Chromosome"/>
</dbReference>
<dbReference type="GO" id="GO:0005829">
    <property type="term" value="C:cytosol"/>
    <property type="evidence" value="ECO:0007669"/>
    <property type="project" value="TreeGrafter"/>
</dbReference>
<dbReference type="GO" id="GO:0015935">
    <property type="term" value="C:small ribosomal subunit"/>
    <property type="evidence" value="ECO:0007669"/>
    <property type="project" value="TreeGrafter"/>
</dbReference>
<dbReference type="GO" id="GO:0019843">
    <property type="term" value="F:rRNA binding"/>
    <property type="evidence" value="ECO:0007669"/>
    <property type="project" value="UniProtKB-UniRule"/>
</dbReference>
<dbReference type="GO" id="GO:0003735">
    <property type="term" value="F:structural constituent of ribosome"/>
    <property type="evidence" value="ECO:0007669"/>
    <property type="project" value="InterPro"/>
</dbReference>
<dbReference type="GO" id="GO:0000049">
    <property type="term" value="F:tRNA binding"/>
    <property type="evidence" value="ECO:0007669"/>
    <property type="project" value="UniProtKB-UniRule"/>
</dbReference>
<dbReference type="GO" id="GO:0006412">
    <property type="term" value="P:translation"/>
    <property type="evidence" value="ECO:0007669"/>
    <property type="project" value="UniProtKB-UniRule"/>
</dbReference>
<dbReference type="FunFam" id="1.10.8.50:FF:000001">
    <property type="entry name" value="30S ribosomal protein S13"/>
    <property type="match status" value="1"/>
</dbReference>
<dbReference type="FunFam" id="4.10.910.10:FF:000001">
    <property type="entry name" value="30S ribosomal protein S13"/>
    <property type="match status" value="1"/>
</dbReference>
<dbReference type="Gene3D" id="1.10.8.50">
    <property type="match status" value="1"/>
</dbReference>
<dbReference type="Gene3D" id="4.10.910.10">
    <property type="entry name" value="30s ribosomal protein s13, domain 2"/>
    <property type="match status" value="1"/>
</dbReference>
<dbReference type="HAMAP" id="MF_01315">
    <property type="entry name" value="Ribosomal_uS13"/>
    <property type="match status" value="1"/>
</dbReference>
<dbReference type="InterPro" id="IPR027437">
    <property type="entry name" value="Rbsml_uS13_C"/>
</dbReference>
<dbReference type="InterPro" id="IPR001892">
    <property type="entry name" value="Ribosomal_uS13"/>
</dbReference>
<dbReference type="InterPro" id="IPR010979">
    <property type="entry name" value="Ribosomal_uS13-like_H2TH"/>
</dbReference>
<dbReference type="InterPro" id="IPR019980">
    <property type="entry name" value="Ribosomal_uS13_bac-type"/>
</dbReference>
<dbReference type="InterPro" id="IPR018269">
    <property type="entry name" value="Ribosomal_uS13_CS"/>
</dbReference>
<dbReference type="NCBIfam" id="TIGR03631">
    <property type="entry name" value="uS13_bact"/>
    <property type="match status" value="1"/>
</dbReference>
<dbReference type="PANTHER" id="PTHR10871">
    <property type="entry name" value="30S RIBOSOMAL PROTEIN S13/40S RIBOSOMAL PROTEIN S18"/>
    <property type="match status" value="1"/>
</dbReference>
<dbReference type="PANTHER" id="PTHR10871:SF1">
    <property type="entry name" value="SMALL RIBOSOMAL SUBUNIT PROTEIN US13M"/>
    <property type="match status" value="1"/>
</dbReference>
<dbReference type="Pfam" id="PF00416">
    <property type="entry name" value="Ribosomal_S13"/>
    <property type="match status" value="1"/>
</dbReference>
<dbReference type="PIRSF" id="PIRSF002134">
    <property type="entry name" value="Ribosomal_S13"/>
    <property type="match status" value="1"/>
</dbReference>
<dbReference type="SUPFAM" id="SSF46946">
    <property type="entry name" value="S13-like H2TH domain"/>
    <property type="match status" value="1"/>
</dbReference>
<dbReference type="PROSITE" id="PS00646">
    <property type="entry name" value="RIBOSOMAL_S13_1"/>
    <property type="match status" value="1"/>
</dbReference>
<dbReference type="PROSITE" id="PS50159">
    <property type="entry name" value="RIBOSOMAL_S13_2"/>
    <property type="match status" value="1"/>
</dbReference>
<name>RS13_SHEHH</name>
<organism>
    <name type="scientific">Shewanella halifaxensis (strain HAW-EB4)</name>
    <dbReference type="NCBI Taxonomy" id="458817"/>
    <lineage>
        <taxon>Bacteria</taxon>
        <taxon>Pseudomonadati</taxon>
        <taxon>Pseudomonadota</taxon>
        <taxon>Gammaproteobacteria</taxon>
        <taxon>Alteromonadales</taxon>
        <taxon>Shewanellaceae</taxon>
        <taxon>Shewanella</taxon>
    </lineage>
</organism>
<accession>B0TLZ1</accession>
<evidence type="ECO:0000255" key="1">
    <source>
        <dbReference type="HAMAP-Rule" id="MF_01315"/>
    </source>
</evidence>
<evidence type="ECO:0000256" key="2">
    <source>
        <dbReference type="SAM" id="MobiDB-lite"/>
    </source>
</evidence>
<evidence type="ECO:0000305" key="3"/>
<gene>
    <name evidence="1" type="primary">rpsM</name>
    <name type="ordered locus">Shal_4113</name>
</gene>
<keyword id="KW-0687">Ribonucleoprotein</keyword>
<keyword id="KW-0689">Ribosomal protein</keyword>
<keyword id="KW-0694">RNA-binding</keyword>
<keyword id="KW-0699">rRNA-binding</keyword>
<keyword id="KW-0820">tRNA-binding</keyword>
<reference key="1">
    <citation type="submission" date="2008-01" db="EMBL/GenBank/DDBJ databases">
        <title>Complete sequence of Shewanella halifaxensis HAW-EB4.</title>
        <authorList>
            <consortium name="US DOE Joint Genome Institute"/>
            <person name="Copeland A."/>
            <person name="Lucas S."/>
            <person name="Lapidus A."/>
            <person name="Glavina del Rio T."/>
            <person name="Dalin E."/>
            <person name="Tice H."/>
            <person name="Bruce D."/>
            <person name="Goodwin L."/>
            <person name="Pitluck S."/>
            <person name="Sims D."/>
            <person name="Brettin T."/>
            <person name="Detter J.C."/>
            <person name="Han C."/>
            <person name="Kuske C.R."/>
            <person name="Schmutz J."/>
            <person name="Larimer F."/>
            <person name="Land M."/>
            <person name="Hauser L."/>
            <person name="Kyrpides N."/>
            <person name="Kim E."/>
            <person name="Zhao J.-S."/>
            <person name="Richardson P."/>
        </authorList>
    </citation>
    <scope>NUCLEOTIDE SEQUENCE [LARGE SCALE GENOMIC DNA]</scope>
    <source>
        <strain>HAW-EB4</strain>
    </source>
</reference>